<name>CS012_MOUSE</name>
<dbReference type="EMBL" id="AK005449">
    <property type="protein sequence ID" value="BAB24042.1"/>
    <property type="molecule type" value="mRNA"/>
</dbReference>
<dbReference type="EMBL" id="AK032342">
    <property type="protein sequence ID" value="BAC27824.1"/>
    <property type="molecule type" value="mRNA"/>
</dbReference>
<dbReference type="EMBL" id="AK146474">
    <property type="protein sequence ID" value="BAE27199.1"/>
    <property type="molecule type" value="mRNA"/>
</dbReference>
<dbReference type="EMBL" id="BC010476">
    <property type="protein sequence ID" value="AAH10476.1"/>
    <property type="molecule type" value="mRNA"/>
</dbReference>
<dbReference type="EMBL" id="BC019834">
    <property type="protein sequence ID" value="AAH19834.1"/>
    <property type="molecule type" value="mRNA"/>
</dbReference>
<dbReference type="EMBL" id="BC085480">
    <property type="protein sequence ID" value="AAH85480.1"/>
    <property type="molecule type" value="mRNA"/>
</dbReference>
<dbReference type="EMBL" id="BC092099">
    <property type="protein sequence ID" value="AAH92099.1"/>
    <property type="status" value="ALT_INIT"/>
    <property type="molecule type" value="mRNA"/>
</dbReference>
<dbReference type="RefSeq" id="NP_001078854.1">
    <property type="nucleotide sequence ID" value="NM_001085385.1"/>
</dbReference>
<dbReference type="RefSeq" id="NP_082442.1">
    <property type="nucleotide sequence ID" value="NM_028166.3"/>
</dbReference>
<dbReference type="FunCoup" id="Q8WUR0">
    <property type="interactions" value="1379"/>
</dbReference>
<dbReference type="STRING" id="10090.ENSMUSP00000130271"/>
<dbReference type="GlyGen" id="Q8WUR0">
    <property type="glycosylation" value="1 site"/>
</dbReference>
<dbReference type="iPTMnet" id="Q8WUR0"/>
<dbReference type="PhosphoSitePlus" id="Q8WUR0"/>
<dbReference type="SwissPalm" id="Q8WUR0"/>
<dbReference type="jPOST" id="Q8WUR0"/>
<dbReference type="PaxDb" id="10090-ENSMUSP00000130271"/>
<dbReference type="Pumba" id="Q8WUR0"/>
<dbReference type="Antibodypedia" id="47936">
    <property type="antibodies" value="39 antibodies from 14 providers"/>
</dbReference>
<dbReference type="Ensembl" id="ENSMUST00000178207.10">
    <property type="protein sequence ID" value="ENSMUSP00000146124.4"/>
    <property type="gene ID" value="ENSMUSG00000054676.18"/>
</dbReference>
<dbReference type="Ensembl" id="ENSMUST00000178876.10">
    <property type="protein sequence ID" value="ENSMUSP00000146135.4"/>
    <property type="gene ID" value="ENSMUSG00000054676.18"/>
</dbReference>
<dbReference type="Ensembl" id="ENSMUST00000179503.5">
    <property type="protein sequence ID" value="ENSMUSP00000145884.4"/>
    <property type="gene ID" value="ENSMUSG00000054676.18"/>
</dbReference>
<dbReference type="Ensembl" id="ENSMUST00000179525.10">
    <property type="protein sequence ID" value="ENSMUSP00000145694.4"/>
    <property type="gene ID" value="ENSMUSG00000054676.18"/>
</dbReference>
<dbReference type="Ensembl" id="ENSMUST00000179992.10">
    <property type="protein sequence ID" value="ENSMUSP00000145679.4"/>
    <property type="gene ID" value="ENSMUSG00000054676.18"/>
</dbReference>
<dbReference type="GeneID" id="72244"/>
<dbReference type="KEGG" id="mmu:72244"/>
<dbReference type="UCSC" id="uc009gks.1">
    <property type="organism name" value="mouse"/>
</dbReference>
<dbReference type="AGR" id="MGI:1919494"/>
<dbReference type="MGI" id="MGI:1919494">
    <property type="gene designation" value="1600014C10Rik"/>
</dbReference>
<dbReference type="VEuPathDB" id="HostDB:ENSMUSG00000054676"/>
<dbReference type="eggNOG" id="ENOG502RZQC">
    <property type="taxonomic scope" value="Eukaryota"/>
</dbReference>
<dbReference type="GeneTree" id="ENSGT00390000009077"/>
<dbReference type="HOGENOM" id="CLU_138025_0_0_1"/>
<dbReference type="InParanoid" id="Q8WUR0"/>
<dbReference type="OMA" id="INTRELM"/>
<dbReference type="OrthoDB" id="5976774at2759"/>
<dbReference type="PhylomeDB" id="Q8WUR0"/>
<dbReference type="TreeFam" id="TF323308"/>
<dbReference type="BioGRID-ORCS" id="72244">
    <property type="hits" value="4 hits in 70 CRISPR screens"/>
</dbReference>
<dbReference type="PRO" id="PR:Q8WUR0"/>
<dbReference type="Proteomes" id="UP000000589">
    <property type="component" value="Chromosome 7"/>
</dbReference>
<dbReference type="RNAct" id="Q8WUR0">
    <property type="molecule type" value="protein"/>
</dbReference>
<dbReference type="Bgee" id="ENSMUSG00000054676">
    <property type="expression patterns" value="Expressed in urinary bladder urothelium and 230 other cell types or tissues"/>
</dbReference>
<dbReference type="ExpressionAtlas" id="Q8WUR0">
    <property type="expression patterns" value="baseline and differential"/>
</dbReference>
<dbReference type="GO" id="GO:0005829">
    <property type="term" value="C:cytosol"/>
    <property type="evidence" value="ECO:0007669"/>
    <property type="project" value="UniProtKB-SubCell"/>
</dbReference>
<dbReference type="GO" id="GO:0005783">
    <property type="term" value="C:endoplasmic reticulum"/>
    <property type="evidence" value="ECO:0000250"/>
    <property type="project" value="UniProtKB"/>
</dbReference>
<dbReference type="GO" id="GO:0031966">
    <property type="term" value="C:mitochondrial membrane"/>
    <property type="evidence" value="ECO:0000250"/>
    <property type="project" value="UniProtKB"/>
</dbReference>
<dbReference type="GO" id="GO:0005739">
    <property type="term" value="C:mitochondrion"/>
    <property type="evidence" value="ECO:0000250"/>
    <property type="project" value="UniProtKB"/>
</dbReference>
<dbReference type="GO" id="GO:0006915">
    <property type="term" value="P:apoptotic process"/>
    <property type="evidence" value="ECO:0007669"/>
    <property type="project" value="Ensembl"/>
</dbReference>
<dbReference type="GO" id="GO:0006914">
    <property type="term" value="P:autophagy"/>
    <property type="evidence" value="ECO:0007669"/>
    <property type="project" value="Ensembl"/>
</dbReference>
<dbReference type="GO" id="GO:0051560">
    <property type="term" value="P:mitochondrial calcium ion homeostasis"/>
    <property type="evidence" value="ECO:0007669"/>
    <property type="project" value="Ensembl"/>
</dbReference>
<dbReference type="GO" id="GO:0006979">
    <property type="term" value="P:response to oxidative stress"/>
    <property type="evidence" value="ECO:0007669"/>
    <property type="project" value="Ensembl"/>
</dbReference>
<dbReference type="InterPro" id="IPR033369">
    <property type="entry name" value="C19orf12"/>
</dbReference>
<dbReference type="PANTHER" id="PTHR31493">
    <property type="entry name" value="NAZO FAMILY MEMBER"/>
    <property type="match status" value="1"/>
</dbReference>
<dbReference type="PANTHER" id="PTHR31493:SF1">
    <property type="entry name" value="PROTEIN C19ORF12"/>
    <property type="match status" value="1"/>
</dbReference>
<dbReference type="Pfam" id="PF20721">
    <property type="entry name" value="C19orf12"/>
    <property type="match status" value="1"/>
</dbReference>
<protein>
    <recommendedName>
        <fullName>Protein C19orf12 homolog</fullName>
    </recommendedName>
</protein>
<comment type="subcellular location">
    <subcellularLocation>
        <location evidence="1">Mitochondrion</location>
    </subcellularLocation>
    <subcellularLocation>
        <location evidence="1">Mitochondrion membrane</location>
        <topology evidence="2">Single-pass membrane protein</topology>
    </subcellularLocation>
    <subcellularLocation>
        <location evidence="1">Endoplasmic reticulum</location>
    </subcellularLocation>
    <subcellularLocation>
        <location evidence="1">Cytoplasm</location>
        <location evidence="1">Cytosol</location>
    </subcellularLocation>
    <text evidence="1">In response to oxidative stress, relocates to the cytosol forming aggregates that partially co-localize with mitochondria.</text>
</comment>
<comment type="similarity">
    <text evidence="3">Belongs to the C19orf12 family.</text>
</comment>
<comment type="sequence caution" evidence="3">
    <conflict type="erroneous initiation">
        <sequence resource="EMBL-CDS" id="AAH92099"/>
    </conflict>
</comment>
<sequence>MPIMVDDIMRLLCSISQERKMKAAVKHSGKGAMVAGAMAFVGGLVGGPPGIAVGGTVGGLLGAWMTSGQFKPVPQILMELPPAEQRKLVNEAMAIIGNLDWTDAVQLTALVMSNQAMQQRLLAMLTTYVTKELQAEIRYED</sequence>
<evidence type="ECO:0000250" key="1">
    <source>
        <dbReference type="UniProtKB" id="Q9NSK7"/>
    </source>
</evidence>
<evidence type="ECO:0000255" key="2"/>
<evidence type="ECO:0000305" key="3"/>
<keyword id="KW-0963">Cytoplasm</keyword>
<keyword id="KW-0256">Endoplasmic reticulum</keyword>
<keyword id="KW-0472">Membrane</keyword>
<keyword id="KW-0496">Mitochondrion</keyword>
<keyword id="KW-1185">Reference proteome</keyword>
<keyword id="KW-0812">Transmembrane</keyword>
<keyword id="KW-1133">Transmembrane helix</keyword>
<reference key="1">
    <citation type="journal article" date="2005" name="Science">
        <title>The transcriptional landscape of the mammalian genome.</title>
        <authorList>
            <person name="Carninci P."/>
            <person name="Kasukawa T."/>
            <person name="Katayama S."/>
            <person name="Gough J."/>
            <person name="Frith M.C."/>
            <person name="Maeda N."/>
            <person name="Oyama R."/>
            <person name="Ravasi T."/>
            <person name="Lenhard B."/>
            <person name="Wells C."/>
            <person name="Kodzius R."/>
            <person name="Shimokawa K."/>
            <person name="Bajic V.B."/>
            <person name="Brenner S.E."/>
            <person name="Batalov S."/>
            <person name="Forrest A.R."/>
            <person name="Zavolan M."/>
            <person name="Davis M.J."/>
            <person name="Wilming L.G."/>
            <person name="Aidinis V."/>
            <person name="Allen J.E."/>
            <person name="Ambesi-Impiombato A."/>
            <person name="Apweiler R."/>
            <person name="Aturaliya R.N."/>
            <person name="Bailey T.L."/>
            <person name="Bansal M."/>
            <person name="Baxter L."/>
            <person name="Beisel K.W."/>
            <person name="Bersano T."/>
            <person name="Bono H."/>
            <person name="Chalk A.M."/>
            <person name="Chiu K.P."/>
            <person name="Choudhary V."/>
            <person name="Christoffels A."/>
            <person name="Clutterbuck D.R."/>
            <person name="Crowe M.L."/>
            <person name="Dalla E."/>
            <person name="Dalrymple B.P."/>
            <person name="de Bono B."/>
            <person name="Della Gatta G."/>
            <person name="di Bernardo D."/>
            <person name="Down T."/>
            <person name="Engstrom P."/>
            <person name="Fagiolini M."/>
            <person name="Faulkner G."/>
            <person name="Fletcher C.F."/>
            <person name="Fukushima T."/>
            <person name="Furuno M."/>
            <person name="Futaki S."/>
            <person name="Gariboldi M."/>
            <person name="Georgii-Hemming P."/>
            <person name="Gingeras T.R."/>
            <person name="Gojobori T."/>
            <person name="Green R.E."/>
            <person name="Gustincich S."/>
            <person name="Harbers M."/>
            <person name="Hayashi Y."/>
            <person name="Hensch T.K."/>
            <person name="Hirokawa N."/>
            <person name="Hill D."/>
            <person name="Huminiecki L."/>
            <person name="Iacono M."/>
            <person name="Ikeo K."/>
            <person name="Iwama A."/>
            <person name="Ishikawa T."/>
            <person name="Jakt M."/>
            <person name="Kanapin A."/>
            <person name="Katoh M."/>
            <person name="Kawasawa Y."/>
            <person name="Kelso J."/>
            <person name="Kitamura H."/>
            <person name="Kitano H."/>
            <person name="Kollias G."/>
            <person name="Krishnan S.P."/>
            <person name="Kruger A."/>
            <person name="Kummerfeld S.K."/>
            <person name="Kurochkin I.V."/>
            <person name="Lareau L.F."/>
            <person name="Lazarevic D."/>
            <person name="Lipovich L."/>
            <person name="Liu J."/>
            <person name="Liuni S."/>
            <person name="McWilliam S."/>
            <person name="Madan Babu M."/>
            <person name="Madera M."/>
            <person name="Marchionni L."/>
            <person name="Matsuda H."/>
            <person name="Matsuzawa S."/>
            <person name="Miki H."/>
            <person name="Mignone F."/>
            <person name="Miyake S."/>
            <person name="Morris K."/>
            <person name="Mottagui-Tabar S."/>
            <person name="Mulder N."/>
            <person name="Nakano N."/>
            <person name="Nakauchi H."/>
            <person name="Ng P."/>
            <person name="Nilsson R."/>
            <person name="Nishiguchi S."/>
            <person name="Nishikawa S."/>
            <person name="Nori F."/>
            <person name="Ohara O."/>
            <person name="Okazaki Y."/>
            <person name="Orlando V."/>
            <person name="Pang K.C."/>
            <person name="Pavan W.J."/>
            <person name="Pavesi G."/>
            <person name="Pesole G."/>
            <person name="Petrovsky N."/>
            <person name="Piazza S."/>
            <person name="Reed J."/>
            <person name="Reid J.F."/>
            <person name="Ring B.Z."/>
            <person name="Ringwald M."/>
            <person name="Rost B."/>
            <person name="Ruan Y."/>
            <person name="Salzberg S.L."/>
            <person name="Sandelin A."/>
            <person name="Schneider C."/>
            <person name="Schoenbach C."/>
            <person name="Sekiguchi K."/>
            <person name="Semple C.A."/>
            <person name="Seno S."/>
            <person name="Sessa L."/>
            <person name="Sheng Y."/>
            <person name="Shibata Y."/>
            <person name="Shimada H."/>
            <person name="Shimada K."/>
            <person name="Silva D."/>
            <person name="Sinclair B."/>
            <person name="Sperling S."/>
            <person name="Stupka E."/>
            <person name="Sugiura K."/>
            <person name="Sultana R."/>
            <person name="Takenaka Y."/>
            <person name="Taki K."/>
            <person name="Tammoja K."/>
            <person name="Tan S.L."/>
            <person name="Tang S."/>
            <person name="Taylor M.S."/>
            <person name="Tegner J."/>
            <person name="Teichmann S.A."/>
            <person name="Ueda H.R."/>
            <person name="van Nimwegen E."/>
            <person name="Verardo R."/>
            <person name="Wei C.L."/>
            <person name="Yagi K."/>
            <person name="Yamanishi H."/>
            <person name="Zabarovsky E."/>
            <person name="Zhu S."/>
            <person name="Zimmer A."/>
            <person name="Hide W."/>
            <person name="Bult C."/>
            <person name="Grimmond S.M."/>
            <person name="Teasdale R.D."/>
            <person name="Liu E.T."/>
            <person name="Brusic V."/>
            <person name="Quackenbush J."/>
            <person name="Wahlestedt C."/>
            <person name="Mattick J.S."/>
            <person name="Hume D.A."/>
            <person name="Kai C."/>
            <person name="Sasaki D."/>
            <person name="Tomaru Y."/>
            <person name="Fukuda S."/>
            <person name="Kanamori-Katayama M."/>
            <person name="Suzuki M."/>
            <person name="Aoki J."/>
            <person name="Arakawa T."/>
            <person name="Iida J."/>
            <person name="Imamura K."/>
            <person name="Itoh M."/>
            <person name="Kato T."/>
            <person name="Kawaji H."/>
            <person name="Kawagashira N."/>
            <person name="Kawashima T."/>
            <person name="Kojima M."/>
            <person name="Kondo S."/>
            <person name="Konno H."/>
            <person name="Nakano K."/>
            <person name="Ninomiya N."/>
            <person name="Nishio T."/>
            <person name="Okada M."/>
            <person name="Plessy C."/>
            <person name="Shibata K."/>
            <person name="Shiraki T."/>
            <person name="Suzuki S."/>
            <person name="Tagami M."/>
            <person name="Waki K."/>
            <person name="Watahiki A."/>
            <person name="Okamura-Oho Y."/>
            <person name="Suzuki H."/>
            <person name="Kawai J."/>
            <person name="Hayashizaki Y."/>
        </authorList>
    </citation>
    <scope>NUCLEOTIDE SEQUENCE [LARGE SCALE MRNA]</scope>
    <source>
        <strain>C57BL/6J</strain>
        <tissue>Embryonic kidney</tissue>
        <tissue>Olfactory bulb</tissue>
        <tissue>Placenta</tissue>
    </source>
</reference>
<reference key="2">
    <citation type="journal article" date="2004" name="Genome Res.">
        <title>The status, quality, and expansion of the NIH full-length cDNA project: the Mammalian Gene Collection (MGC).</title>
        <authorList>
            <consortium name="The MGC Project Team"/>
        </authorList>
    </citation>
    <scope>NUCLEOTIDE SEQUENCE [LARGE SCALE MRNA]</scope>
    <source>
        <strain>C57BL/6J</strain>
        <strain>FVB/N</strain>
        <tissue>Brain</tissue>
        <tissue>Liver</tissue>
        <tissue>Mammary tumor</tissue>
    </source>
</reference>
<reference key="3">
    <citation type="journal article" date="2010" name="Cell">
        <title>A tissue-specific atlas of mouse protein phosphorylation and expression.</title>
        <authorList>
            <person name="Huttlin E.L."/>
            <person name="Jedrychowski M.P."/>
            <person name="Elias J.E."/>
            <person name="Goswami T."/>
            <person name="Rad R."/>
            <person name="Beausoleil S.A."/>
            <person name="Villen J."/>
            <person name="Haas W."/>
            <person name="Sowa M.E."/>
            <person name="Gygi S.P."/>
        </authorList>
    </citation>
    <scope>IDENTIFICATION BY MASS SPECTROMETRY [LARGE SCALE ANALYSIS]</scope>
    <source>
        <tissue>Brain</tissue>
        <tissue>Brown adipose tissue</tissue>
        <tissue>Heart</tissue>
        <tissue>Kidney</tissue>
        <tissue>Liver</tissue>
        <tissue>Testis</tissue>
    </source>
</reference>
<proteinExistence type="evidence at protein level"/>
<accession>Q8WUR0</accession>
<accession>Q58E27</accession>
<accession>Q8K308</accession>
<accession>Q9DAX5</accession>
<feature type="chain" id="PRO_0000296663" description="Protein C19orf12 homolog">
    <location>
        <begin position="1"/>
        <end position="141"/>
    </location>
</feature>
<feature type="transmembrane region" description="Helical" evidence="2">
    <location>
        <begin position="33"/>
        <end position="53"/>
    </location>
</feature>
<feature type="sequence conflict" description="In Ref. 2; AAH92099." evidence="3" ref="2">
    <original>P</original>
    <variation>S</variation>
    <location>
        <position position="2"/>
    </location>
</feature>
<feature type="sequence conflict" description="In Ref. 2; AAH92099." evidence="3" ref="2">
    <original>I</original>
    <variation>V</variation>
    <location>
        <position position="8"/>
    </location>
</feature>
<feature type="sequence conflict" description="In Ref. 2; AAH92099." evidence="3" ref="2">
    <original>T</original>
    <variation>L</variation>
    <location>
        <position position="56"/>
    </location>
</feature>
<feature type="sequence conflict" description="In Ref. 2; AAH92099." evidence="3" ref="2">
    <original>L</original>
    <variation>I</variation>
    <location>
        <position position="61"/>
    </location>
</feature>
<feature type="sequence conflict" description="In Ref. 2; AAH92099." evidence="3" ref="2">
    <original>V</original>
    <variation>I</variation>
    <location>
        <position position="73"/>
    </location>
</feature>
<feature type="sequence conflict" description="In Ref. 2; AAH92099." evidence="3" ref="2">
    <original>QR</original>
    <variation>KQ</variation>
    <location>
        <begin position="85"/>
        <end position="86"/>
    </location>
</feature>
<feature type="sequence conflict" description="In Ref. 2; AAH92099." evidence="3" ref="2">
    <original>EA</original>
    <variation>QV</variation>
    <location>
        <begin position="91"/>
        <end position="92"/>
    </location>
</feature>
<feature type="sequence conflict" description="In Ref. 2; AAH92099." evidence="3" ref="2">
    <original>GN</original>
    <variation>RH</variation>
    <location>
        <begin position="97"/>
        <end position="98"/>
    </location>
</feature>
<feature type="sequence conflict" description="In Ref. 2; AAH92099." evidence="3" ref="2">
    <original>M</original>
    <variation>I</variation>
    <location>
        <position position="124"/>
    </location>
</feature>
<feature type="sequence conflict" description="In Ref. 2; AAH92099." evidence="3" ref="2">
    <original>T</original>
    <variation>S</variation>
    <location>
        <position position="127"/>
    </location>
</feature>
<feature type="sequence conflict" description="In Ref. 2; AAH92099." evidence="3" ref="2">
    <original>QAEIRYE</original>
    <variation>KAKICYG</variation>
    <location>
        <begin position="134"/>
        <end position="140"/>
    </location>
</feature>
<organism>
    <name type="scientific">Mus musculus</name>
    <name type="common">Mouse</name>
    <dbReference type="NCBI Taxonomy" id="10090"/>
    <lineage>
        <taxon>Eukaryota</taxon>
        <taxon>Metazoa</taxon>
        <taxon>Chordata</taxon>
        <taxon>Craniata</taxon>
        <taxon>Vertebrata</taxon>
        <taxon>Euteleostomi</taxon>
        <taxon>Mammalia</taxon>
        <taxon>Eutheria</taxon>
        <taxon>Euarchontoglires</taxon>
        <taxon>Glires</taxon>
        <taxon>Rodentia</taxon>
        <taxon>Myomorpha</taxon>
        <taxon>Muroidea</taxon>
        <taxon>Muridae</taxon>
        <taxon>Murinae</taxon>
        <taxon>Mus</taxon>
        <taxon>Mus</taxon>
    </lineage>
</organism>